<name>O52E5_HUMAN</name>
<feature type="chain" id="PRO_0000150774" description="Olfactory receptor 52E5">
    <location>
        <begin position="1"/>
        <end position="327"/>
    </location>
</feature>
<feature type="topological domain" description="Extracellular" evidence="1">
    <location>
        <begin position="1"/>
        <end position="30"/>
    </location>
</feature>
<feature type="transmembrane region" description="Helical" evidence="1">
    <location>
        <begin position="31"/>
        <end position="51"/>
    </location>
</feature>
<feature type="topological domain" description="Cytoplasmic" evidence="1">
    <location>
        <begin position="52"/>
        <end position="56"/>
    </location>
</feature>
<feature type="transmembrane region" description="Helical; Name=2" evidence="1">
    <location>
        <begin position="57"/>
        <end position="77"/>
    </location>
</feature>
<feature type="topological domain" description="Extracellular" evidence="1">
    <location>
        <begin position="78"/>
        <end position="101"/>
    </location>
</feature>
<feature type="transmembrane region" description="Helical; Name=3" evidence="1">
    <location>
        <begin position="102"/>
        <end position="122"/>
    </location>
</feature>
<feature type="topological domain" description="Cytoplasmic" evidence="1">
    <location>
        <begin position="123"/>
        <end position="144"/>
    </location>
</feature>
<feature type="transmembrane region" description="Helical; Name=4" evidence="1">
    <location>
        <begin position="145"/>
        <end position="165"/>
    </location>
</feature>
<feature type="topological domain" description="Extracellular" evidence="1">
    <location>
        <begin position="166"/>
        <end position="195"/>
    </location>
</feature>
<feature type="transmembrane region" description="Helical; Name=5" evidence="1">
    <location>
        <begin position="196"/>
        <end position="216"/>
    </location>
</feature>
<feature type="topological domain" description="Cytoplasmic" evidence="1">
    <location>
        <begin position="217"/>
        <end position="238"/>
    </location>
</feature>
<feature type="transmembrane region" description="Helical; Name=6" evidence="1">
    <location>
        <begin position="239"/>
        <end position="259"/>
    </location>
</feature>
<feature type="topological domain" description="Extracellular" evidence="1">
    <location>
        <begin position="260"/>
        <end position="272"/>
    </location>
</feature>
<feature type="transmembrane region" description="Helical; Name=7" evidence="1">
    <location>
        <begin position="273"/>
        <end position="293"/>
    </location>
</feature>
<feature type="topological domain" description="Cytoplasmic" evidence="1">
    <location>
        <begin position="294"/>
        <end position="327"/>
    </location>
</feature>
<feature type="glycosylation site" description="N-linked (GlcNAc...) asparagine" evidence="1">
    <location>
        <position position="5"/>
    </location>
</feature>
<feature type="disulfide bond" evidence="2">
    <location>
        <begin position="99"/>
        <end position="191"/>
    </location>
</feature>
<feature type="sequence variant" id="VAR_034338" description="In dbSNP:rs17234326.">
    <original>I</original>
    <variation>T</variation>
    <location>
        <position position="165"/>
    </location>
</feature>
<feature type="sequence variant" id="VAR_034339" description="In dbSNP:rs16926732.">
    <original>D</original>
    <variation>G</variation>
    <location>
        <position position="209"/>
    </location>
</feature>
<feature type="sequence variant" id="VAR_034340" description="In dbSNP:rs7106300.">
    <original>P</original>
    <variation>L</variation>
    <location>
        <position position="234"/>
    </location>
</feature>
<dbReference type="EMBL" id="AB065536">
    <property type="protein sequence ID" value="BAC05782.1"/>
    <property type="status" value="ALT_SEQ"/>
    <property type="molecule type" value="Genomic_DNA"/>
</dbReference>
<dbReference type="CCDS" id="CCDS91427.1"/>
<dbReference type="RefSeq" id="NP_001005166.3">
    <property type="nucleotide sequence ID" value="NM_001005166.5"/>
</dbReference>
<dbReference type="SMR" id="Q8NH55"/>
<dbReference type="FunCoup" id="Q8NH55">
    <property type="interactions" value="108"/>
</dbReference>
<dbReference type="STRING" id="9606.ENSP00000480583"/>
<dbReference type="GlyCosmos" id="Q8NH55">
    <property type="glycosylation" value="1 site, No reported glycans"/>
</dbReference>
<dbReference type="GlyGen" id="Q8NH55">
    <property type="glycosylation" value="3 sites, 1 N-linked glycan (1 site), 1 O-linked glycan (1 site)"/>
</dbReference>
<dbReference type="BioMuta" id="OR52E5"/>
<dbReference type="DMDM" id="557952596"/>
<dbReference type="PaxDb" id="9606-ENSP00000480583"/>
<dbReference type="Antibodypedia" id="73008">
    <property type="antibodies" value="18 antibodies from 10 providers"/>
</dbReference>
<dbReference type="Ensembl" id="ENST00000610445.2">
    <property type="protein sequence ID" value="ENSP00000480583.1"/>
    <property type="gene ID" value="ENSG00000277932.2"/>
</dbReference>
<dbReference type="GeneID" id="390082"/>
<dbReference type="MANE-Select" id="ENST00000610445.2">
    <property type="protein sequence ID" value="ENSP00000480583.1"/>
    <property type="RefSeq nucleotide sequence ID" value="NM_001005166.5"/>
    <property type="RefSeq protein sequence ID" value="NP_001005166.3"/>
</dbReference>
<dbReference type="UCSC" id="uc057yiu.1">
    <property type="organism name" value="human"/>
</dbReference>
<dbReference type="AGR" id="HGNC:15214"/>
<dbReference type="GeneCards" id="OR52E5"/>
<dbReference type="HGNC" id="HGNC:15214">
    <property type="gene designation" value="OR52E5"/>
</dbReference>
<dbReference type="HPA" id="ENSG00000277932">
    <property type="expression patterns" value="Not detected"/>
</dbReference>
<dbReference type="neXtProt" id="NX_Q8NH55"/>
<dbReference type="VEuPathDB" id="HostDB:ENSG00000277932"/>
<dbReference type="eggNOG" id="ENOG502TDW4">
    <property type="taxonomic scope" value="Eukaryota"/>
</dbReference>
<dbReference type="GeneTree" id="ENSGT01090000260056"/>
<dbReference type="HOGENOM" id="CLU_012526_0_0_1"/>
<dbReference type="InParanoid" id="Q8NH55"/>
<dbReference type="OMA" id="MYTIHIC"/>
<dbReference type="OrthoDB" id="9444602at2759"/>
<dbReference type="PAN-GO" id="Q8NH55">
    <property type="GO annotations" value="0 GO annotations based on evolutionary models"/>
</dbReference>
<dbReference type="PathwayCommons" id="Q8NH55"/>
<dbReference type="Reactome" id="R-HSA-9752946">
    <property type="pathway name" value="Expression and translocation of olfactory receptors"/>
</dbReference>
<dbReference type="Pharos" id="Q8NH55">
    <property type="development level" value="Tdark"/>
</dbReference>
<dbReference type="PRO" id="PR:Q8NH55"/>
<dbReference type="Proteomes" id="UP000005640">
    <property type="component" value="Chromosome 11"/>
</dbReference>
<dbReference type="RNAct" id="Q8NH55">
    <property type="molecule type" value="protein"/>
</dbReference>
<dbReference type="Bgee" id="ENSG00000277932">
    <property type="expression patterns" value="Expressed in male germ line stem cell (sensu Vertebrata) in testis"/>
</dbReference>
<dbReference type="GO" id="GO:0005886">
    <property type="term" value="C:plasma membrane"/>
    <property type="evidence" value="ECO:0000318"/>
    <property type="project" value="GO_Central"/>
</dbReference>
<dbReference type="GO" id="GO:0004930">
    <property type="term" value="F:G protein-coupled receptor activity"/>
    <property type="evidence" value="ECO:0007669"/>
    <property type="project" value="UniProtKB-KW"/>
</dbReference>
<dbReference type="GO" id="GO:0004984">
    <property type="term" value="F:olfactory receptor activity"/>
    <property type="evidence" value="ECO:0000318"/>
    <property type="project" value="GO_Central"/>
</dbReference>
<dbReference type="CDD" id="cd15952">
    <property type="entry name" value="7tmA_OR52E-like"/>
    <property type="match status" value="1"/>
</dbReference>
<dbReference type="FunFam" id="1.20.1070.10:FF:000006">
    <property type="entry name" value="Olfactory receptor"/>
    <property type="match status" value="1"/>
</dbReference>
<dbReference type="Gene3D" id="1.20.1070.10">
    <property type="entry name" value="Rhodopsin 7-helix transmembrane proteins"/>
    <property type="match status" value="1"/>
</dbReference>
<dbReference type="InterPro" id="IPR000276">
    <property type="entry name" value="GPCR_Rhodpsn"/>
</dbReference>
<dbReference type="InterPro" id="IPR017452">
    <property type="entry name" value="GPCR_Rhodpsn_7TM"/>
</dbReference>
<dbReference type="InterPro" id="IPR000725">
    <property type="entry name" value="Olfact_rcpt"/>
</dbReference>
<dbReference type="InterPro" id="IPR050402">
    <property type="entry name" value="OR51/52/56-like"/>
</dbReference>
<dbReference type="PANTHER" id="PTHR26450:SF23">
    <property type="entry name" value="OLFACTORY RECEPTOR 52E5"/>
    <property type="match status" value="1"/>
</dbReference>
<dbReference type="PANTHER" id="PTHR26450">
    <property type="entry name" value="OLFACTORY RECEPTOR 56B1-RELATED"/>
    <property type="match status" value="1"/>
</dbReference>
<dbReference type="Pfam" id="PF13853">
    <property type="entry name" value="7tm_4"/>
    <property type="match status" value="1"/>
</dbReference>
<dbReference type="PRINTS" id="PR00237">
    <property type="entry name" value="GPCRRHODOPSN"/>
</dbReference>
<dbReference type="PRINTS" id="PR00245">
    <property type="entry name" value="OLFACTORYR"/>
</dbReference>
<dbReference type="SUPFAM" id="SSF81321">
    <property type="entry name" value="Family A G protein-coupled receptor-like"/>
    <property type="match status" value="1"/>
</dbReference>
<dbReference type="PROSITE" id="PS00237">
    <property type="entry name" value="G_PROTEIN_RECEP_F1_1"/>
    <property type="match status" value="1"/>
</dbReference>
<dbReference type="PROSITE" id="PS50262">
    <property type="entry name" value="G_PROTEIN_RECEP_F1_2"/>
    <property type="match status" value="1"/>
</dbReference>
<reference key="1">
    <citation type="submission" date="2001-07" db="EMBL/GenBank/DDBJ databases">
        <title>Genome-wide discovery and analysis of human seven transmembrane helix receptor genes.</title>
        <authorList>
            <person name="Suwa M."/>
            <person name="Sato T."/>
            <person name="Okouchi I."/>
            <person name="Arita M."/>
            <person name="Futami K."/>
            <person name="Matsumoto S."/>
            <person name="Tsutsumi S."/>
            <person name="Aburatani H."/>
            <person name="Asai K."/>
            <person name="Akiyama Y."/>
        </authorList>
    </citation>
    <scope>NUCLEOTIDE SEQUENCE [GENOMIC DNA]</scope>
</reference>
<sequence length="327" mass="36851">MLHTNNTQFHPSTFLVVGVPGLEDVHVWIGFPFFAVYLTALLGNIIILFVIQTEQSLHQPMFYFLAMLAGTDLGLSTATIPKMLGIFWFNLGEIAFGACITQMYTIHICTGLESVVLTVTGIDRYIAICNPLRYSMILTNKVIAILGIVIIVRTLVFVTPFTFLILRLPFCGVRIIPHTYCEHMGLAKLACASINVIYGLIAFSVGYIDISVIGFSYVQILRAVFHLPAWDARPKALSTCGSHVCVMLAFYLPALFSFMTHRFGHNIPHYIHILLANLYVVFPPALNSVIYGVKTKQIREQVLRILNPKSFWHFDPKRIFHNNSVRQ</sequence>
<organism>
    <name type="scientific">Homo sapiens</name>
    <name type="common">Human</name>
    <dbReference type="NCBI Taxonomy" id="9606"/>
    <lineage>
        <taxon>Eukaryota</taxon>
        <taxon>Metazoa</taxon>
        <taxon>Chordata</taxon>
        <taxon>Craniata</taxon>
        <taxon>Vertebrata</taxon>
        <taxon>Euteleostomi</taxon>
        <taxon>Mammalia</taxon>
        <taxon>Eutheria</taxon>
        <taxon>Euarchontoglires</taxon>
        <taxon>Primates</taxon>
        <taxon>Haplorrhini</taxon>
        <taxon>Catarrhini</taxon>
        <taxon>Hominidae</taxon>
        <taxon>Homo</taxon>
    </lineage>
</organism>
<protein>
    <recommendedName>
        <fullName>Olfactory receptor 52E5</fullName>
    </recommendedName>
</protein>
<evidence type="ECO:0000255" key="1"/>
<evidence type="ECO:0000255" key="2">
    <source>
        <dbReference type="PROSITE-ProRule" id="PRU00521"/>
    </source>
</evidence>
<evidence type="ECO:0000305" key="3"/>
<accession>Q8NH55</accession>
<gene>
    <name type="primary">OR52E5</name>
</gene>
<keyword id="KW-1003">Cell membrane</keyword>
<keyword id="KW-1015">Disulfide bond</keyword>
<keyword id="KW-0297">G-protein coupled receptor</keyword>
<keyword id="KW-0325">Glycoprotein</keyword>
<keyword id="KW-0472">Membrane</keyword>
<keyword id="KW-0552">Olfaction</keyword>
<keyword id="KW-0675">Receptor</keyword>
<keyword id="KW-1185">Reference proteome</keyword>
<keyword id="KW-0716">Sensory transduction</keyword>
<keyword id="KW-0807">Transducer</keyword>
<keyword id="KW-0812">Transmembrane</keyword>
<keyword id="KW-1133">Transmembrane helix</keyword>
<proteinExistence type="inferred from homology"/>
<comment type="function">
    <text evidence="3">Odorant receptor.</text>
</comment>
<comment type="subcellular location">
    <subcellularLocation>
        <location>Cell membrane</location>
        <topology>Multi-pass membrane protein</topology>
    </subcellularLocation>
</comment>
<comment type="similarity">
    <text evidence="2">Belongs to the G-protein coupled receptor 1 family.</text>
</comment>
<comment type="sequence caution" evidence="3">
    <conflict type="erroneous gene model prediction">
        <sequence resource="EMBL-CDS" id="BAC05782"/>
    </conflict>
</comment>
<comment type="online information" name="Human Olfactory Receptor Data Exploratorium (HORDE)">
    <link uri="http://genome.weizmann.ac.il/horde/card/index/symbol:OR52E5"/>
</comment>